<keyword id="KW-0007">Acetylation</keyword>
<keyword id="KW-0472">Membrane</keyword>
<keyword id="KW-0597">Phosphoprotein</keyword>
<keyword id="KW-0653">Protein transport</keyword>
<keyword id="KW-1185">Reference proteome</keyword>
<keyword id="KW-0812">Transmembrane</keyword>
<keyword id="KW-1133">Transmembrane helix</keyword>
<keyword id="KW-0813">Transport</keyword>
<name>SFT2B_RAT</name>
<dbReference type="EMBL" id="BC099092">
    <property type="protein sequence ID" value="AAH99092.1"/>
    <property type="molecule type" value="mRNA"/>
</dbReference>
<dbReference type="RefSeq" id="NP_001029183.1">
    <property type="nucleotide sequence ID" value="NM_001034011.1"/>
</dbReference>
<dbReference type="FunCoup" id="Q4FZV2">
    <property type="interactions" value="783"/>
</dbReference>
<dbReference type="STRING" id="10116.ENSRNOP00000004065"/>
<dbReference type="PhosphoSitePlus" id="Q4FZV2"/>
<dbReference type="PaxDb" id="10116-ENSRNOP00000068143"/>
<dbReference type="GeneID" id="360868"/>
<dbReference type="KEGG" id="rno:360868"/>
<dbReference type="UCSC" id="RGD:1310623">
    <property type="organism name" value="rat"/>
</dbReference>
<dbReference type="AGR" id="RGD:1310623"/>
<dbReference type="CTD" id="375035"/>
<dbReference type="RGD" id="1310623">
    <property type="gene designation" value="Sft2d2"/>
</dbReference>
<dbReference type="eggNOG" id="KOG2887">
    <property type="taxonomic scope" value="Eukaryota"/>
</dbReference>
<dbReference type="InParanoid" id="Q4FZV2"/>
<dbReference type="OrthoDB" id="59816at9989"/>
<dbReference type="PhylomeDB" id="Q4FZV2"/>
<dbReference type="TreeFam" id="TF315157"/>
<dbReference type="PRO" id="PR:Q4FZV2"/>
<dbReference type="Proteomes" id="UP000002494">
    <property type="component" value="Unplaced"/>
</dbReference>
<dbReference type="GO" id="GO:0005737">
    <property type="term" value="C:cytoplasm"/>
    <property type="evidence" value="ECO:0007669"/>
    <property type="project" value="UniProtKB-ARBA"/>
</dbReference>
<dbReference type="GO" id="GO:0012505">
    <property type="term" value="C:endomembrane system"/>
    <property type="evidence" value="ECO:0007669"/>
    <property type="project" value="UniProtKB-ARBA"/>
</dbReference>
<dbReference type="GO" id="GO:0043231">
    <property type="term" value="C:intracellular membrane-bounded organelle"/>
    <property type="evidence" value="ECO:0007669"/>
    <property type="project" value="UniProtKB-ARBA"/>
</dbReference>
<dbReference type="GO" id="GO:0016020">
    <property type="term" value="C:membrane"/>
    <property type="evidence" value="ECO:0007669"/>
    <property type="project" value="UniProtKB-SubCell"/>
</dbReference>
<dbReference type="GO" id="GO:0015031">
    <property type="term" value="P:protein transport"/>
    <property type="evidence" value="ECO:0007669"/>
    <property type="project" value="UniProtKB-KW"/>
</dbReference>
<dbReference type="GO" id="GO:0016192">
    <property type="term" value="P:vesicle-mediated transport"/>
    <property type="evidence" value="ECO:0007669"/>
    <property type="project" value="InterPro"/>
</dbReference>
<dbReference type="InterPro" id="IPR007305">
    <property type="entry name" value="Vesicle_transpt_Got1/SFT2"/>
</dbReference>
<dbReference type="InterPro" id="IPR011691">
    <property type="entry name" value="Vesicle_transpt_SFT2"/>
</dbReference>
<dbReference type="PANTHER" id="PTHR23137:SF1">
    <property type="entry name" value="VESICLE TRANSPORT PROTEIN SFT2B"/>
    <property type="match status" value="1"/>
</dbReference>
<dbReference type="PANTHER" id="PTHR23137">
    <property type="entry name" value="VESICLE TRANSPORT PROTEIN-RELATED"/>
    <property type="match status" value="1"/>
</dbReference>
<dbReference type="Pfam" id="PF04178">
    <property type="entry name" value="Got1"/>
    <property type="match status" value="1"/>
</dbReference>
<evidence type="ECO:0000250" key="1">
    <source>
        <dbReference type="UniProtKB" id="O95562"/>
    </source>
</evidence>
<evidence type="ECO:0000250" key="2">
    <source>
        <dbReference type="UniProtKB" id="P38166"/>
    </source>
</evidence>
<evidence type="ECO:0000255" key="3"/>
<sequence>MDKLKKVLSGQDTEDRSGLSEVVESSSLSWSTRIKGFIVCFALGILCSLLGTLLLWVSRKGLFAVFYTLGNITSIGSTMFLMGPLKQLKRMFEPTRLIATILVLLFFVLTLCSAFLWNKGLALIFCILQSLALTWYSLSYIPYARDAVKKCFAVCLT</sequence>
<organism>
    <name type="scientific">Rattus norvegicus</name>
    <name type="common">Rat</name>
    <dbReference type="NCBI Taxonomy" id="10116"/>
    <lineage>
        <taxon>Eukaryota</taxon>
        <taxon>Metazoa</taxon>
        <taxon>Chordata</taxon>
        <taxon>Craniata</taxon>
        <taxon>Vertebrata</taxon>
        <taxon>Euteleostomi</taxon>
        <taxon>Mammalia</taxon>
        <taxon>Eutheria</taxon>
        <taxon>Euarchontoglires</taxon>
        <taxon>Glires</taxon>
        <taxon>Rodentia</taxon>
        <taxon>Myomorpha</taxon>
        <taxon>Muroidea</taxon>
        <taxon>Muridae</taxon>
        <taxon>Murinae</taxon>
        <taxon>Rattus</taxon>
    </lineage>
</organism>
<accession>Q4FZV2</accession>
<comment type="function">
    <text evidence="2">May be involved in fusion of retrograde transport vesicles derived from an endocytic compartment with the Golgi complex.</text>
</comment>
<comment type="subcellular location">
    <subcellularLocation>
        <location evidence="3">Membrane</location>
        <topology evidence="3">Multi-pass membrane protein</topology>
    </subcellularLocation>
</comment>
<comment type="similarity">
    <text evidence="3">Belongs to the SFT2 family.</text>
</comment>
<feature type="chain" id="PRO_0000238612" description="Vesicle transport protein SFT2B">
    <location>
        <begin position="1"/>
        <end position="157"/>
    </location>
</feature>
<feature type="topological domain" description="Cytoplasmic" evidence="3">
    <location>
        <begin position="1"/>
        <end position="36"/>
    </location>
</feature>
<feature type="transmembrane region" description="Helical; Name=1" evidence="3">
    <location>
        <begin position="37"/>
        <end position="57"/>
    </location>
</feature>
<feature type="topological domain" description="Lumenal" evidence="3">
    <location>
        <begin position="58"/>
        <end position="61"/>
    </location>
</feature>
<feature type="transmembrane region" description="Helical; Name=2" evidence="3">
    <location>
        <begin position="62"/>
        <end position="82"/>
    </location>
</feature>
<feature type="topological domain" description="Cytoplasmic" evidence="3">
    <location>
        <begin position="83"/>
        <end position="96"/>
    </location>
</feature>
<feature type="transmembrane region" description="Helical; Name=3" evidence="3">
    <location>
        <begin position="97"/>
        <end position="117"/>
    </location>
</feature>
<feature type="topological domain" description="Lumenal" evidence="3">
    <location>
        <begin position="118"/>
        <end position="120"/>
    </location>
</feature>
<feature type="transmembrane region" description="Helical; Name=4" evidence="3">
    <location>
        <begin position="121"/>
        <end position="141"/>
    </location>
</feature>
<feature type="topological domain" description="Cytoplasmic" evidence="3">
    <location>
        <begin position="142"/>
        <end position="157"/>
    </location>
</feature>
<feature type="modified residue" description="N-acetylmethionine" evidence="1">
    <location>
        <position position="1"/>
    </location>
</feature>
<feature type="modified residue" description="Phosphoserine" evidence="1">
    <location>
        <position position="9"/>
    </location>
</feature>
<protein>
    <recommendedName>
        <fullName>Vesicle transport protein SFT2B</fullName>
    </recommendedName>
    <alternativeName>
        <fullName>SFT2 domain-containing protein 2</fullName>
    </alternativeName>
</protein>
<reference key="1">
    <citation type="journal article" date="2004" name="Genome Res.">
        <title>The status, quality, and expansion of the NIH full-length cDNA project: the Mammalian Gene Collection (MGC).</title>
        <authorList>
            <consortium name="The MGC Project Team"/>
        </authorList>
    </citation>
    <scope>NUCLEOTIDE SEQUENCE [LARGE SCALE MRNA]</scope>
    <source>
        <tissue>Placenta</tissue>
    </source>
</reference>
<proteinExistence type="evidence at transcript level"/>
<gene>
    <name evidence="1" type="primary">Sft2d2</name>
</gene>